<organism>
    <name type="scientific">Homo sapiens</name>
    <name type="common">Human</name>
    <dbReference type="NCBI Taxonomy" id="9606"/>
    <lineage>
        <taxon>Eukaryota</taxon>
        <taxon>Metazoa</taxon>
        <taxon>Chordata</taxon>
        <taxon>Craniata</taxon>
        <taxon>Vertebrata</taxon>
        <taxon>Euteleostomi</taxon>
        <taxon>Mammalia</taxon>
        <taxon>Eutheria</taxon>
        <taxon>Euarchontoglires</taxon>
        <taxon>Primates</taxon>
        <taxon>Haplorrhini</taxon>
        <taxon>Catarrhini</taxon>
        <taxon>Hominidae</taxon>
        <taxon>Homo</taxon>
    </lineage>
</organism>
<reference key="1">
    <citation type="journal article" date="2007" name="BMC Genomics">
        <title>The full-ORF clone resource of the German cDNA consortium.</title>
        <authorList>
            <person name="Bechtel S."/>
            <person name="Rosenfelder H."/>
            <person name="Duda A."/>
            <person name="Schmidt C.P."/>
            <person name="Ernst U."/>
            <person name="Wellenreuther R."/>
            <person name="Mehrle A."/>
            <person name="Schuster C."/>
            <person name="Bahr A."/>
            <person name="Bloecker H."/>
            <person name="Heubner D."/>
            <person name="Hoerlein A."/>
            <person name="Michel G."/>
            <person name="Wedler H."/>
            <person name="Koehrer K."/>
            <person name="Ottenwaelder B."/>
            <person name="Poustka A."/>
            <person name="Wiemann S."/>
            <person name="Schupp I."/>
        </authorList>
    </citation>
    <scope>NUCLEOTIDE SEQUENCE [LARGE SCALE MRNA]</scope>
    <scope>VARIANT PRO-1665</scope>
    <source>
        <tissue>Testis</tissue>
    </source>
</reference>
<reference key="2">
    <citation type="journal article" date="2005" name="Nature">
        <title>Generation and annotation of the DNA sequences of human chromosomes 2 and 4.</title>
        <authorList>
            <person name="Hillier L.W."/>
            <person name="Graves T.A."/>
            <person name="Fulton R.S."/>
            <person name="Fulton L.A."/>
            <person name="Pepin K.H."/>
            <person name="Minx P."/>
            <person name="Wagner-McPherson C."/>
            <person name="Layman D."/>
            <person name="Wylie K."/>
            <person name="Sekhon M."/>
            <person name="Becker M.C."/>
            <person name="Fewell G.A."/>
            <person name="Delehaunty K.D."/>
            <person name="Miner T.L."/>
            <person name="Nash W.E."/>
            <person name="Kremitzki C."/>
            <person name="Oddy L."/>
            <person name="Du H."/>
            <person name="Sun H."/>
            <person name="Bradshaw-Cordum H."/>
            <person name="Ali J."/>
            <person name="Carter J."/>
            <person name="Cordes M."/>
            <person name="Harris A."/>
            <person name="Isak A."/>
            <person name="van Brunt A."/>
            <person name="Nguyen C."/>
            <person name="Du F."/>
            <person name="Courtney L."/>
            <person name="Kalicki J."/>
            <person name="Ozersky P."/>
            <person name="Abbott S."/>
            <person name="Armstrong J."/>
            <person name="Belter E.A."/>
            <person name="Caruso L."/>
            <person name="Cedroni M."/>
            <person name="Cotton M."/>
            <person name="Davidson T."/>
            <person name="Desai A."/>
            <person name="Elliott G."/>
            <person name="Erb T."/>
            <person name="Fronick C."/>
            <person name="Gaige T."/>
            <person name="Haakenson W."/>
            <person name="Haglund K."/>
            <person name="Holmes A."/>
            <person name="Harkins R."/>
            <person name="Kim K."/>
            <person name="Kruchowski S.S."/>
            <person name="Strong C.M."/>
            <person name="Grewal N."/>
            <person name="Goyea E."/>
            <person name="Hou S."/>
            <person name="Levy A."/>
            <person name="Martinka S."/>
            <person name="Mead K."/>
            <person name="McLellan M.D."/>
            <person name="Meyer R."/>
            <person name="Randall-Maher J."/>
            <person name="Tomlinson C."/>
            <person name="Dauphin-Kohlberg S."/>
            <person name="Kozlowicz-Reilly A."/>
            <person name="Shah N."/>
            <person name="Swearengen-Shahid S."/>
            <person name="Snider J."/>
            <person name="Strong J.T."/>
            <person name="Thompson J."/>
            <person name="Yoakum M."/>
            <person name="Leonard S."/>
            <person name="Pearman C."/>
            <person name="Trani L."/>
            <person name="Radionenko M."/>
            <person name="Waligorski J.E."/>
            <person name="Wang C."/>
            <person name="Rock S.M."/>
            <person name="Tin-Wollam A.-M."/>
            <person name="Maupin R."/>
            <person name="Latreille P."/>
            <person name="Wendl M.C."/>
            <person name="Yang S.-P."/>
            <person name="Pohl C."/>
            <person name="Wallis J.W."/>
            <person name="Spieth J."/>
            <person name="Bieri T.A."/>
            <person name="Berkowicz N."/>
            <person name="Nelson J.O."/>
            <person name="Osborne J."/>
            <person name="Ding L."/>
            <person name="Meyer R."/>
            <person name="Sabo A."/>
            <person name="Shotland Y."/>
            <person name="Sinha P."/>
            <person name="Wohldmann P.E."/>
            <person name="Cook L.L."/>
            <person name="Hickenbotham M.T."/>
            <person name="Eldred J."/>
            <person name="Williams D."/>
            <person name="Jones T.A."/>
            <person name="She X."/>
            <person name="Ciccarelli F.D."/>
            <person name="Izaurralde E."/>
            <person name="Taylor J."/>
            <person name="Schmutz J."/>
            <person name="Myers R.M."/>
            <person name="Cox D.R."/>
            <person name="Huang X."/>
            <person name="McPherson J.D."/>
            <person name="Mardis E.R."/>
            <person name="Clifton S.W."/>
            <person name="Warren W.C."/>
            <person name="Chinwalla A.T."/>
            <person name="Eddy S.R."/>
            <person name="Marra M.A."/>
            <person name="Ovcharenko I."/>
            <person name="Furey T.S."/>
            <person name="Miller W."/>
            <person name="Eichler E.E."/>
            <person name="Bork P."/>
            <person name="Suyama M."/>
            <person name="Torrents D."/>
            <person name="Waterston R.H."/>
            <person name="Wilson R.K."/>
        </authorList>
    </citation>
    <scope>NUCLEOTIDE SEQUENCE [LARGE SCALE GENOMIC DNA]</scope>
</reference>
<reference key="3">
    <citation type="journal article" date="2004" name="Genome Res.">
        <title>The status, quality, and expansion of the NIH full-length cDNA project: the Mammalian Gene Collection (MGC).</title>
        <authorList>
            <consortium name="The MGC Project Team"/>
        </authorList>
    </citation>
    <scope>NUCLEOTIDE SEQUENCE [LARGE SCALE MRNA]</scope>
</reference>
<reference key="4">
    <citation type="journal article" date="2001" name="Genome Res.">
        <title>Towards a catalog of human genes and proteins: sequencing and analysis of 500 novel complete protein coding human cDNAs.</title>
        <authorList>
            <person name="Wiemann S."/>
            <person name="Weil B."/>
            <person name="Wellenreuther R."/>
            <person name="Gassenhuber J."/>
            <person name="Glassl S."/>
            <person name="Ansorge W."/>
            <person name="Boecher M."/>
            <person name="Bloecker H."/>
            <person name="Bauersachs S."/>
            <person name="Blum H."/>
            <person name="Lauber J."/>
            <person name="Duesterhoeft A."/>
            <person name="Beyer A."/>
            <person name="Koehrer K."/>
            <person name="Strack N."/>
            <person name="Mewes H.-W."/>
            <person name="Ottenwaelder B."/>
            <person name="Obermaier B."/>
            <person name="Tampe J."/>
            <person name="Heubner D."/>
            <person name="Wambutt R."/>
            <person name="Korn B."/>
            <person name="Klein M."/>
            <person name="Poustka A."/>
        </authorList>
    </citation>
    <scope>NUCLEOTIDE SEQUENCE [LARGE SCALE MRNA] OF 1031-1984</scope>
    <scope>VARIANT PRO-1665</scope>
    <source>
        <tissue>Testis</tissue>
    </source>
</reference>
<reference key="5">
    <citation type="journal article" date="2023" name="Andrology">
        <title>The human sperm proteome-Toward a panel for male fertility testing.</title>
        <authorList>
            <person name="Greither T."/>
            <person name="Dejung M."/>
            <person name="Behre H.M."/>
            <person name="Butter F."/>
            <person name="Herlyn H."/>
        </authorList>
    </citation>
    <scope>TISSUE SPECIFICITY</scope>
</reference>
<comment type="tissue specificity">
    <text evidence="4">Expressed in sperm (at protein level).</text>
</comment>
<comment type="domain">
    <text>The P-S-E-R-S-H-H-S repeats give rise to an antiparallel beta-structure.</text>
</comment>
<comment type="sequence caution" evidence="5">
    <conflict type="erroneous initiation">
        <sequence resource="EMBL-CDS" id="AAX93198"/>
    </conflict>
    <text>Truncated N-terminus.</text>
</comment>
<accession>Q68DN1</accession>
<accession>B9EIQ4</accession>
<accession>Q53S01</accession>
<accession>Q8ND64</accession>
<accession>Q9H088</accession>
<sequence length="1984" mass="224321">MELTPGAQQQGINYQELTSGWQDVKSMMLVPEPTRKFPSGPLLTSVRFSNLSPESQQQDVKSLEFTVEPKLQSVKHVKLSSVSLQQTIKSVELAPGSLPQRVKYGEQTPRTNYQIMESSELIPRPGHQFAKYAEMIPQPKYQIPKSANLISIPIYHATESSEMAQGLAYKGIDTVEKSVGLTPKLTGRAKESLGMLLQPDLQVPKFVDLTPMVRDQGSKFLGLTPEKSYQILETMELLSQSRPRVKDVGELYMKPLQQTVEYEGITPELKHYFTEAMGLTAEARIQANEFFGMTPKPTSQATGFAERSPRLCPQNLECVEVISEKRLQGEESVVLIPKSLHHVPDSASGMTPGLGHRVPESVELTSKSGVQVEKTLQLTPKPQHHVGSPGIISGLGHQVPESVNLTCKQWLQMEESLEVPLKQTSQVIGHEESVELTSEARQHREVSMGLTKSKNQSMKSPGTTPGPLGRIVEFMRISPEPLDQVTESARTQLQVAQSEEVILIDVPKVVQSVKVTPGPPFQIVKSVTIPRPTPQMVEYIELTPKLQYVRPSEHHTGPCLQDVKSTKLITKPKHQILETVELTGFQIVKTMLIPGPSLQIVKSEELAPGPIPQVVEPIGVALESGIEAINCVDLLPRPHLQELIVPAELTPSPCTQVKSAELTSPQTSPFEEHTILTHKQGLQAVKSTVIKTEPPKVMETEDLNLGHVCQNRDCQKLTSEELQVGTDFSRFLQSSSTTLISSSVRTASELGGLWDSGIQEVSRALDIKNPGTDILQPEETYIDPTMIQSLTFPLALHNQSSDKTANIVENPCPEILGVDVISKETTKRKQMEELENSLQRHLPQSWRSRSRTFQAESGVQKGLIKSFPGRQHNVWESHAWRQRLPRKYLSTMLMLGNILGTTMERKLCSQTSLAERATADTCQSIQNLFGIPAELMEPSQSLPEKGPVTISQPSVVKNYIQRHTFYHGHKKRMALRIWTRGSTSSIIQQYSGTRVRIKKTNSTFNGISQEVIQHMPVSCAGGQLPVLVKSESSLSIFYDREDLVPMEESEDSQSDSQTRISESQHSLKPNYLSQAKTDFSEQFQLLEDLQLKIAAKLLRSQIPPDVPPPLASGLVLKYPICLQCGRCSGLNCHHKLQTTSGPYLLIYPQLHLVRTPEGHGEVRLHLGFRLRIGKRSQISKYRERDRPVIRRSPISPSQRKAKIYTQASKSPTSTIDLQSGPSQSPAPVQVYIRRGQRSRPDLVEKTKTRAPGHYEFTQVHNLPESDSESTQNEKRAKVRTKKTSDSKYPMKRITKRLRKHRKFYTNSRTTIESPSRELAAHLRRKRIGATQTSTASLKRQPKKPSQPKFMQLLFQSLKRAFQTAHRVIASVGRKPVDGTRPDNLWASKNYYPKQNARDYCLPSSIKRDKRSADKLTPAGSTIKQEDILWGGTVQCRSAQQPRRAYSFQPRPLRLPKPTDSQSGIAFQTASVGQPLRTVQKDSSSRSKKNFYRNETSSQESKNLSTPGTRVQARGRILPGSPVKRTWHRHLKDKLTHKEHNHPSFYRERTPRGPSERTRHNPSWRNHRSPSERSQRSSLERRHHSPSQRSHCSPSRKNHSSPSERSWRSPSQRNHCSPPERSCHSLSERGLHSPSQRSHRGPSQRRHHSPSERSHRSPSERSHRSSSERRHRSPSQRSHRGPSERSHCSPSERRHRSPSQRSHRGPSERRHHSPSKRSHRSPARRSHRSPSERSHHSPSERSHHSPSERRHHSPSERSHCSPSERSHCSPSERRHRSPSERRHHSPSEKSHHSPSERSHHSPSERRRHSPLERSRHSLLERSHRSPSERRSHRSFERSHRRISERSHSPSEKSHLSPLERSRCSPSERRGHSSSGKTCHSPSERSHRSPSGMRQGRTSERSHRSSCERTRHSPSEMRPGRPSGRNHCSPSERSRRSPLKEGLKYSFPGERPSHSLSRDFKNQTTLLGTTHKNPKAGQVWRPEATR</sequence>
<keyword id="KW-1267">Proteomics identification</keyword>
<keyword id="KW-1185">Reference proteome</keyword>
<keyword id="KW-0677">Repeat</keyword>
<proteinExistence type="evidence at protein level"/>
<name>S31H1_HUMAN</name>
<dbReference type="EMBL" id="AL834384">
    <property type="protein sequence ID" value="CAD39047.1"/>
    <property type="molecule type" value="mRNA"/>
</dbReference>
<dbReference type="EMBL" id="CR749335">
    <property type="protein sequence ID" value="CAH18189.1"/>
    <property type="molecule type" value="mRNA"/>
</dbReference>
<dbReference type="EMBL" id="AC074091">
    <property type="protein sequence ID" value="AAX93198.1"/>
    <property type="status" value="ALT_INIT"/>
    <property type="molecule type" value="Genomic_DNA"/>
</dbReference>
<dbReference type="EMBL" id="BC140828">
    <property type="protein sequence ID" value="AAI40829.1"/>
    <property type="molecule type" value="mRNA"/>
</dbReference>
<dbReference type="EMBL" id="AL136898">
    <property type="protein sequence ID" value="CAB66832.2"/>
    <property type="molecule type" value="mRNA"/>
</dbReference>
<dbReference type="RefSeq" id="NP_115642.3">
    <property type="nucleotide sequence ID" value="NM_032266.3"/>
</dbReference>
<dbReference type="BioGRID" id="123960">
    <property type="interactions" value="4"/>
</dbReference>
<dbReference type="IntAct" id="Q68DN1">
    <property type="interactions" value="1"/>
</dbReference>
<dbReference type="STRING" id="9606.ENSP00000386190"/>
<dbReference type="GlyGen" id="Q68DN1">
    <property type="glycosylation" value="6 sites, 1 O-linked glycan (3 sites)"/>
</dbReference>
<dbReference type="iPTMnet" id="Q68DN1"/>
<dbReference type="PhosphoSitePlus" id="Q68DN1"/>
<dbReference type="BioMuta" id="C2orf16"/>
<dbReference type="DMDM" id="296439423"/>
<dbReference type="jPOST" id="Q68DN1"/>
<dbReference type="MassIVE" id="Q68DN1"/>
<dbReference type="PaxDb" id="9606-ENSP00000386190"/>
<dbReference type="ProteomicsDB" id="66093"/>
<dbReference type="Antibodypedia" id="62791">
    <property type="antibodies" value="41 antibodies from 7 providers"/>
</dbReference>
<dbReference type="DNASU" id="84226"/>
<dbReference type="GeneID" id="84226"/>
<dbReference type="KEGG" id="hsa:84226"/>
<dbReference type="UCSC" id="uc002rkz.5">
    <property type="organism name" value="human"/>
</dbReference>
<dbReference type="AGR" id="HGNC:25275"/>
<dbReference type="CTD" id="84226"/>
<dbReference type="DisGeNET" id="84226"/>
<dbReference type="GeneCards" id="SPATA31H1"/>
<dbReference type="HGNC" id="HGNC:25275">
    <property type="gene designation" value="SPATA31H1"/>
</dbReference>
<dbReference type="neXtProt" id="NX_Q68DN1"/>
<dbReference type="PharmGKB" id="PA134977296"/>
<dbReference type="VEuPathDB" id="HostDB:ENSG00000221843"/>
<dbReference type="eggNOG" id="ENOG502S9JK">
    <property type="taxonomic scope" value="Eukaryota"/>
</dbReference>
<dbReference type="HOGENOM" id="CLU_002788_0_0_1"/>
<dbReference type="InParanoid" id="Q68DN1"/>
<dbReference type="OrthoDB" id="9450569at2759"/>
<dbReference type="PAN-GO" id="Q68DN1">
    <property type="GO annotations" value="0 GO annotations based on evolutionary models"/>
</dbReference>
<dbReference type="PhylomeDB" id="Q68DN1"/>
<dbReference type="TreeFam" id="TF339785"/>
<dbReference type="PathwayCommons" id="Q68DN1"/>
<dbReference type="SignaLink" id="Q68DN1"/>
<dbReference type="BioGRID-ORCS" id="84226">
    <property type="hits" value="10 hits in 1115 CRISPR screens"/>
</dbReference>
<dbReference type="GenomeRNAi" id="84226"/>
<dbReference type="Pharos" id="Q68DN1">
    <property type="development level" value="Tdark"/>
</dbReference>
<dbReference type="PRO" id="PR:Q68DN1"/>
<dbReference type="Proteomes" id="UP000005640">
    <property type="component" value="Chromosome 2"/>
</dbReference>
<dbReference type="RNAct" id="Q68DN1">
    <property type="molecule type" value="protein"/>
</dbReference>
<dbReference type="Bgee" id="ENSG00000221843">
    <property type="expression patterns" value="Expressed in sperm and 103 other cell types or tissues"/>
</dbReference>
<dbReference type="ExpressionAtlas" id="Q68DN1">
    <property type="expression patterns" value="baseline and differential"/>
</dbReference>
<dbReference type="GO" id="GO:0070062">
    <property type="term" value="C:extracellular exosome"/>
    <property type="evidence" value="ECO:0007005"/>
    <property type="project" value="UniProtKB"/>
</dbReference>
<dbReference type="GO" id="GO:0005634">
    <property type="term" value="C:nucleus"/>
    <property type="evidence" value="ECO:0007005"/>
    <property type="project" value="UniProtKB"/>
</dbReference>
<dbReference type="PANTHER" id="PTHR33888">
    <property type="entry name" value="RIKEN CDNA 4932415D10 GENE"/>
    <property type="match status" value="1"/>
</dbReference>
<dbReference type="PANTHER" id="PTHR33888:SF1">
    <property type="entry name" value="RIKEN CDNA 4932415D10 GENE"/>
    <property type="match status" value="1"/>
</dbReference>
<evidence type="ECO:0000256" key="1">
    <source>
        <dbReference type="SAM" id="MobiDB-lite"/>
    </source>
</evidence>
<evidence type="ECO:0000269" key="2">
    <source>
    </source>
</evidence>
<evidence type="ECO:0000269" key="3">
    <source>
    </source>
</evidence>
<evidence type="ECO:0000269" key="4">
    <source>
    </source>
</evidence>
<evidence type="ECO:0000305" key="5"/>
<evidence type="ECO:0000312" key="6">
    <source>
        <dbReference type="HGNC" id="HGNC:25275"/>
    </source>
</evidence>
<protein>
    <recommendedName>
        <fullName evidence="5">Spermatogenesis-associated protein 31H1</fullName>
    </recommendedName>
</protein>
<gene>
    <name evidence="6" type="primary">SPATA31H1</name>
    <name type="synonym">C2orf16</name>
</gene>
<feature type="chain" id="PRO_0000281907" description="Spermatogenesis-associated protein 31H1">
    <location>
        <begin position="1"/>
        <end position="1984"/>
    </location>
</feature>
<feature type="repeat" description="1">
    <location>
        <begin position="1593"/>
        <end position="1600"/>
    </location>
</feature>
<feature type="repeat" description="2">
    <location>
        <begin position="1601"/>
        <end position="1608"/>
    </location>
</feature>
<feature type="repeat" description="3">
    <location>
        <begin position="1609"/>
        <end position="1616"/>
    </location>
</feature>
<feature type="repeat" description="4">
    <location>
        <begin position="1641"/>
        <end position="1648"/>
    </location>
</feature>
<feature type="repeat" description="5">
    <location>
        <begin position="1649"/>
        <end position="1656"/>
    </location>
</feature>
<feature type="repeat" description="6">
    <location>
        <begin position="1657"/>
        <end position="1664"/>
    </location>
</feature>
<feature type="repeat" description="7">
    <location>
        <begin position="1681"/>
        <end position="1688"/>
    </location>
</feature>
<feature type="repeat" description="8">
    <location>
        <begin position="1689"/>
        <end position="1696"/>
    </location>
</feature>
<feature type="repeat" description="9">
    <location>
        <begin position="1697"/>
        <end position="1704"/>
    </location>
</feature>
<feature type="repeat" description="10">
    <location>
        <begin position="1705"/>
        <end position="1712"/>
    </location>
</feature>
<feature type="repeat" description="11">
    <location>
        <begin position="1713"/>
        <end position="1720"/>
    </location>
</feature>
<feature type="repeat" description="12">
    <location>
        <begin position="1721"/>
        <end position="1728"/>
    </location>
</feature>
<feature type="repeat" description="13">
    <location>
        <begin position="1729"/>
        <end position="1736"/>
    </location>
</feature>
<feature type="repeat" description="14">
    <location>
        <begin position="1737"/>
        <end position="1744"/>
    </location>
</feature>
<feature type="repeat" description="15">
    <location>
        <begin position="1745"/>
        <end position="1752"/>
    </location>
</feature>
<feature type="repeat" description="16">
    <location>
        <begin position="1753"/>
        <end position="1760"/>
    </location>
</feature>
<feature type="repeat" description="17">
    <location>
        <begin position="1761"/>
        <end position="1768"/>
    </location>
</feature>
<feature type="repeat" description="18">
    <location>
        <begin position="1769"/>
        <end position="1776"/>
    </location>
</feature>
<feature type="repeat" description="19">
    <location>
        <begin position="1777"/>
        <end position="1784"/>
    </location>
</feature>
<feature type="repeat" description="20">
    <location>
        <begin position="1785"/>
        <end position="1792"/>
    </location>
</feature>
<feature type="repeat" description="21">
    <location>
        <begin position="1793"/>
        <end position="1800"/>
    </location>
</feature>
<feature type="repeat" description="22">
    <location>
        <begin position="1801"/>
        <end position="1808"/>
    </location>
</feature>
<feature type="repeat" description="23">
    <location>
        <begin position="1848"/>
        <end position="1855"/>
    </location>
</feature>
<feature type="repeat" description="24">
    <location>
        <begin position="1864"/>
        <end position="1871"/>
    </location>
</feature>
<feature type="repeat" description="25">
    <location>
        <begin position="1880"/>
        <end position="1887"/>
    </location>
</feature>
<feature type="repeat" description="26">
    <location>
        <begin position="1921"/>
        <end position="1928"/>
    </location>
</feature>
<feature type="repeat" description="27">
    <location>
        <begin position="1929"/>
        <end position="1935"/>
    </location>
</feature>
<feature type="region of interest" description="Disordered" evidence="1">
    <location>
        <begin position="448"/>
        <end position="467"/>
    </location>
</feature>
<feature type="region of interest" description="Disordered" evidence="1">
    <location>
        <begin position="1045"/>
        <end position="1067"/>
    </location>
</feature>
<feature type="region of interest" description="Disordered" evidence="1">
    <location>
        <begin position="1181"/>
        <end position="1287"/>
    </location>
</feature>
<feature type="region of interest" description="Disordered" evidence="1">
    <location>
        <begin position="1326"/>
        <end position="1346"/>
    </location>
</feature>
<feature type="region of interest" description="Disordered" evidence="1">
    <location>
        <begin position="1439"/>
        <end position="1984"/>
    </location>
</feature>
<feature type="region of interest" description="27 X 8 AA approximate tandem repeat of P-S-E-R-S-H-H-S">
    <location>
        <begin position="1593"/>
        <end position="1935"/>
    </location>
</feature>
<feature type="compositionally biased region" description="Polar residues" evidence="1">
    <location>
        <begin position="450"/>
        <end position="463"/>
    </location>
</feature>
<feature type="compositionally biased region" description="Polar residues" evidence="1">
    <location>
        <begin position="1058"/>
        <end position="1067"/>
    </location>
</feature>
<feature type="compositionally biased region" description="Polar residues" evidence="1">
    <location>
        <begin position="1205"/>
        <end position="1226"/>
    </location>
</feature>
<feature type="compositionally biased region" description="Basic and acidic residues" evidence="1">
    <location>
        <begin position="1238"/>
        <end position="1247"/>
    </location>
</feature>
<feature type="compositionally biased region" description="Polar residues" evidence="1">
    <location>
        <begin position="1458"/>
        <end position="1471"/>
    </location>
</feature>
<feature type="compositionally biased region" description="Polar residues" evidence="1">
    <location>
        <begin position="1492"/>
        <end position="1508"/>
    </location>
</feature>
<feature type="compositionally biased region" description="Basic and acidic residues" evidence="1">
    <location>
        <begin position="1532"/>
        <end position="1558"/>
    </location>
</feature>
<feature type="compositionally biased region" description="Basic and acidic residues" evidence="1">
    <location>
        <begin position="1568"/>
        <end position="1579"/>
    </location>
</feature>
<feature type="compositionally biased region" description="Low complexity" evidence="1">
    <location>
        <begin position="1599"/>
        <end position="1610"/>
    </location>
</feature>
<feature type="compositionally biased region" description="Basic and acidic residues" evidence="1">
    <location>
        <begin position="1620"/>
        <end position="1630"/>
    </location>
</feature>
<feature type="compositionally biased region" description="Basic residues" evidence="1">
    <location>
        <begin position="1636"/>
        <end position="1647"/>
    </location>
</feature>
<feature type="compositionally biased region" description="Basic and acidic residues" evidence="1">
    <location>
        <begin position="1648"/>
        <end position="1667"/>
    </location>
</feature>
<feature type="compositionally biased region" description="Basic residues" evidence="1">
    <location>
        <begin position="1668"/>
        <end position="1679"/>
    </location>
</feature>
<feature type="compositionally biased region" description="Basic and acidic residues" evidence="1">
    <location>
        <begin position="1680"/>
        <end position="1691"/>
    </location>
</feature>
<feature type="compositionally biased region" description="Basic residues" evidence="1">
    <location>
        <begin position="1692"/>
        <end position="1727"/>
    </location>
</feature>
<feature type="compositionally biased region" description="Basic and acidic residues" evidence="1">
    <location>
        <begin position="1728"/>
        <end position="1869"/>
    </location>
</feature>
<feature type="compositionally biased region" description="Basic and acidic residues" evidence="1">
    <location>
        <begin position="1895"/>
        <end position="1917"/>
    </location>
</feature>
<feature type="compositionally biased region" description="Basic and acidic residues" evidence="1">
    <location>
        <begin position="1928"/>
        <end position="1941"/>
    </location>
</feature>
<feature type="compositionally biased region" description="Basic and acidic residues" evidence="1">
    <location>
        <begin position="1949"/>
        <end position="1959"/>
    </location>
</feature>
<feature type="compositionally biased region" description="Polar residues" evidence="1">
    <location>
        <begin position="1960"/>
        <end position="1969"/>
    </location>
</feature>
<feature type="sequence variant" id="VAR_031313" description="In dbSNP:rs17006143.">
    <original>R</original>
    <variation>G</variation>
    <location>
        <position position="357"/>
    </location>
</feature>
<feature type="sequence variant" id="VAR_031314" description="In dbSNP:rs13410886.">
    <original>D</original>
    <variation>V</variation>
    <location>
        <position position="505"/>
    </location>
</feature>
<feature type="sequence variant" id="VAR_031315" description="In dbSNP:rs1919125.">
    <original>T</original>
    <variation>S</variation>
    <location>
        <position position="655"/>
    </location>
</feature>
<feature type="sequence variant" id="VAR_031316" description="In dbSNP:rs1919126.">
    <original>A</original>
    <variation>E</variation>
    <location>
        <position position="660"/>
    </location>
</feature>
<feature type="sequence variant" id="VAR_031317" description="In dbSNP:rs1919127.">
    <original>V</original>
    <variation>A</variation>
    <location>
        <position position="685"/>
    </location>
</feature>
<feature type="sequence variant" id="VAR_031318" description="In dbSNP:rs13416968.">
    <original>I</original>
    <variation>T</variation>
    <location>
        <position position="767"/>
    </location>
</feature>
<feature type="sequence variant" id="VAR_031319" description="In dbSNP:rs1919128.">
    <original>I</original>
    <variation>V</variation>
    <location>
        <position position="774"/>
    </location>
</feature>
<feature type="sequence variant" id="VAR_031320" description="In dbSNP:rs12618071.">
    <original>S</original>
    <variation>F</variation>
    <location>
        <position position="1500"/>
    </location>
</feature>
<feature type="sequence variant" id="VAR_031321" description="In dbSNP:rs13392197.">
    <original>H</original>
    <variation>Y</variation>
    <location>
        <position position="1559"/>
    </location>
</feature>
<feature type="sequence variant" id="VAR_031322" description="In dbSNP:rs13031957.">
    <original>N</original>
    <variation>S</variation>
    <location>
        <position position="1613"/>
    </location>
</feature>
<feature type="sequence variant" id="VAR_031323" description="In dbSNP:rs28381983." evidence="2 3">
    <original>S</original>
    <variation>P</variation>
    <location>
        <position position="1665"/>
    </location>
</feature>
<feature type="sequence conflict" description="In Ref. 1; CAH18189." evidence="5" ref="1">
    <original>Q</original>
    <variation>L</variation>
    <location>
        <position position="613"/>
    </location>
</feature>
<feature type="sequence conflict" description="In Ref. 1; CAH18189." evidence="5" ref="1">
    <original>N</original>
    <variation>D</variation>
    <location>
        <position position="1493"/>
    </location>
</feature>